<name>MDH_ECO55</name>
<sequence length="312" mass="32310">MKVAVLGAAGGIGQALALLLKTQLPSGSELSLYDIAPVTPGVAVDLSHIPTAVKIKGFSGEDATPALEGADVVLISAGVARKPGMDRSDLFNVNAGIVKNLVQQVAKTCPKACIGIITNPVNTTVAIAAEVLKKAGVYDKNKLFGVTTLDIIRSNTFVAELKGKQPGEVEVPVIGGHSGVTILPLLSQVPGVSFTEQEVADLTKRIQNAGTEVVEAKAGGGSATLSMGQAAARFGLSLVRALQGEQGVVECAYVEGDGQYARFFSQPLLLGKNGVEERKSIGTLSAFEQSALEGMLDTLKKDIALGEEFVNK</sequence>
<reference key="1">
    <citation type="journal article" date="2009" name="PLoS Genet.">
        <title>Organised genome dynamics in the Escherichia coli species results in highly diverse adaptive paths.</title>
        <authorList>
            <person name="Touchon M."/>
            <person name="Hoede C."/>
            <person name="Tenaillon O."/>
            <person name="Barbe V."/>
            <person name="Baeriswyl S."/>
            <person name="Bidet P."/>
            <person name="Bingen E."/>
            <person name="Bonacorsi S."/>
            <person name="Bouchier C."/>
            <person name="Bouvet O."/>
            <person name="Calteau A."/>
            <person name="Chiapello H."/>
            <person name="Clermont O."/>
            <person name="Cruveiller S."/>
            <person name="Danchin A."/>
            <person name="Diard M."/>
            <person name="Dossat C."/>
            <person name="Karoui M.E."/>
            <person name="Frapy E."/>
            <person name="Garry L."/>
            <person name="Ghigo J.M."/>
            <person name="Gilles A.M."/>
            <person name="Johnson J."/>
            <person name="Le Bouguenec C."/>
            <person name="Lescat M."/>
            <person name="Mangenot S."/>
            <person name="Martinez-Jehanne V."/>
            <person name="Matic I."/>
            <person name="Nassif X."/>
            <person name="Oztas S."/>
            <person name="Petit M.A."/>
            <person name="Pichon C."/>
            <person name="Rouy Z."/>
            <person name="Ruf C.S."/>
            <person name="Schneider D."/>
            <person name="Tourret J."/>
            <person name="Vacherie B."/>
            <person name="Vallenet D."/>
            <person name="Medigue C."/>
            <person name="Rocha E.P.C."/>
            <person name="Denamur E."/>
        </authorList>
    </citation>
    <scope>NUCLEOTIDE SEQUENCE [LARGE SCALE GENOMIC DNA]</scope>
    <source>
        <strain>55989 / EAEC</strain>
    </source>
</reference>
<proteinExistence type="inferred from homology"/>
<feature type="chain" id="PRO_1000185076" description="Malate dehydrogenase">
    <location>
        <begin position="1"/>
        <end position="312"/>
    </location>
</feature>
<feature type="active site" description="Proton acceptor" evidence="1">
    <location>
        <position position="177"/>
    </location>
</feature>
<feature type="binding site" evidence="1">
    <location>
        <begin position="7"/>
        <end position="13"/>
    </location>
    <ligand>
        <name>NAD(+)</name>
        <dbReference type="ChEBI" id="CHEBI:57540"/>
    </ligand>
</feature>
<feature type="binding site" evidence="1">
    <location>
        <position position="34"/>
    </location>
    <ligand>
        <name>NAD(+)</name>
        <dbReference type="ChEBI" id="CHEBI:57540"/>
    </ligand>
</feature>
<feature type="binding site" evidence="1">
    <location>
        <position position="81"/>
    </location>
    <ligand>
        <name>substrate</name>
    </ligand>
</feature>
<feature type="binding site" evidence="1">
    <location>
        <position position="87"/>
    </location>
    <ligand>
        <name>substrate</name>
    </ligand>
</feature>
<feature type="binding site" evidence="1">
    <location>
        <position position="94"/>
    </location>
    <ligand>
        <name>NAD(+)</name>
        <dbReference type="ChEBI" id="CHEBI:57540"/>
    </ligand>
</feature>
<feature type="binding site" evidence="1">
    <location>
        <begin position="117"/>
        <end position="119"/>
    </location>
    <ligand>
        <name>NAD(+)</name>
        <dbReference type="ChEBI" id="CHEBI:57540"/>
    </ligand>
</feature>
<feature type="binding site" evidence="1">
    <location>
        <position position="119"/>
    </location>
    <ligand>
        <name>substrate</name>
    </ligand>
</feature>
<feature type="binding site" evidence="1">
    <location>
        <position position="153"/>
    </location>
    <ligand>
        <name>substrate</name>
    </ligand>
</feature>
<feature type="binding site" evidence="1">
    <location>
        <position position="227"/>
    </location>
    <ligand>
        <name>NAD(+)</name>
        <dbReference type="ChEBI" id="CHEBI:57540"/>
    </ligand>
</feature>
<dbReference type="EC" id="1.1.1.37" evidence="1"/>
<dbReference type="EMBL" id="CU928145">
    <property type="protein sequence ID" value="CAU99903.1"/>
    <property type="molecule type" value="Genomic_DNA"/>
</dbReference>
<dbReference type="RefSeq" id="WP_001307415.1">
    <property type="nucleotide sequence ID" value="NC_011748.1"/>
</dbReference>
<dbReference type="SMR" id="B7LHU4"/>
<dbReference type="KEGG" id="eck:EC55989_3649"/>
<dbReference type="HOGENOM" id="CLU_047181_0_1_6"/>
<dbReference type="Proteomes" id="UP000000746">
    <property type="component" value="Chromosome"/>
</dbReference>
<dbReference type="GO" id="GO:0005737">
    <property type="term" value="C:cytoplasm"/>
    <property type="evidence" value="ECO:0007669"/>
    <property type="project" value="TreeGrafter"/>
</dbReference>
<dbReference type="GO" id="GO:0030060">
    <property type="term" value="F:L-malate dehydrogenase (NAD+) activity"/>
    <property type="evidence" value="ECO:0007669"/>
    <property type="project" value="UniProtKB-UniRule"/>
</dbReference>
<dbReference type="GO" id="GO:0006108">
    <property type="term" value="P:malate metabolic process"/>
    <property type="evidence" value="ECO:0007669"/>
    <property type="project" value="InterPro"/>
</dbReference>
<dbReference type="GO" id="GO:0006099">
    <property type="term" value="P:tricarboxylic acid cycle"/>
    <property type="evidence" value="ECO:0007669"/>
    <property type="project" value="UniProtKB-UniRule"/>
</dbReference>
<dbReference type="CDD" id="cd01337">
    <property type="entry name" value="MDH_glyoxysomal_mitochondrial"/>
    <property type="match status" value="1"/>
</dbReference>
<dbReference type="FunFam" id="3.40.50.720:FF:000017">
    <property type="entry name" value="Malate dehydrogenase"/>
    <property type="match status" value="1"/>
</dbReference>
<dbReference type="FunFam" id="3.90.110.10:FF:000001">
    <property type="entry name" value="Malate dehydrogenase"/>
    <property type="match status" value="1"/>
</dbReference>
<dbReference type="Gene3D" id="3.90.110.10">
    <property type="entry name" value="Lactate dehydrogenase/glycoside hydrolase, family 4, C-terminal"/>
    <property type="match status" value="1"/>
</dbReference>
<dbReference type="Gene3D" id="3.40.50.720">
    <property type="entry name" value="NAD(P)-binding Rossmann-like Domain"/>
    <property type="match status" value="1"/>
</dbReference>
<dbReference type="HAMAP" id="MF_01516">
    <property type="entry name" value="Malate_dehydrog_1"/>
    <property type="match status" value="1"/>
</dbReference>
<dbReference type="InterPro" id="IPR001557">
    <property type="entry name" value="L-lactate/malate_DH"/>
</dbReference>
<dbReference type="InterPro" id="IPR022383">
    <property type="entry name" value="Lactate/malate_DH_C"/>
</dbReference>
<dbReference type="InterPro" id="IPR001236">
    <property type="entry name" value="Lactate/malate_DH_N"/>
</dbReference>
<dbReference type="InterPro" id="IPR015955">
    <property type="entry name" value="Lactate_DH/Glyco_Ohase_4_C"/>
</dbReference>
<dbReference type="InterPro" id="IPR001252">
    <property type="entry name" value="Malate_DH_AS"/>
</dbReference>
<dbReference type="InterPro" id="IPR010097">
    <property type="entry name" value="Malate_DH_type1"/>
</dbReference>
<dbReference type="InterPro" id="IPR023958">
    <property type="entry name" value="Malate_DH_type1_bac"/>
</dbReference>
<dbReference type="InterPro" id="IPR036291">
    <property type="entry name" value="NAD(P)-bd_dom_sf"/>
</dbReference>
<dbReference type="NCBIfam" id="TIGR01772">
    <property type="entry name" value="MDH_euk_gproteo"/>
    <property type="match status" value="1"/>
</dbReference>
<dbReference type="PANTHER" id="PTHR11540">
    <property type="entry name" value="MALATE AND LACTATE DEHYDROGENASE"/>
    <property type="match status" value="1"/>
</dbReference>
<dbReference type="PANTHER" id="PTHR11540:SF16">
    <property type="entry name" value="MALATE DEHYDROGENASE, MITOCHONDRIAL"/>
    <property type="match status" value="1"/>
</dbReference>
<dbReference type="Pfam" id="PF02866">
    <property type="entry name" value="Ldh_1_C"/>
    <property type="match status" value="1"/>
</dbReference>
<dbReference type="Pfam" id="PF00056">
    <property type="entry name" value="Ldh_1_N"/>
    <property type="match status" value="1"/>
</dbReference>
<dbReference type="PIRSF" id="PIRSF000102">
    <property type="entry name" value="Lac_mal_DH"/>
    <property type="match status" value="1"/>
</dbReference>
<dbReference type="SUPFAM" id="SSF56327">
    <property type="entry name" value="LDH C-terminal domain-like"/>
    <property type="match status" value="1"/>
</dbReference>
<dbReference type="SUPFAM" id="SSF51735">
    <property type="entry name" value="NAD(P)-binding Rossmann-fold domains"/>
    <property type="match status" value="1"/>
</dbReference>
<dbReference type="PROSITE" id="PS00068">
    <property type="entry name" value="MDH"/>
    <property type="match status" value="1"/>
</dbReference>
<organism>
    <name type="scientific">Escherichia coli (strain 55989 / EAEC)</name>
    <dbReference type="NCBI Taxonomy" id="585055"/>
    <lineage>
        <taxon>Bacteria</taxon>
        <taxon>Pseudomonadati</taxon>
        <taxon>Pseudomonadota</taxon>
        <taxon>Gammaproteobacteria</taxon>
        <taxon>Enterobacterales</taxon>
        <taxon>Enterobacteriaceae</taxon>
        <taxon>Escherichia</taxon>
    </lineage>
</organism>
<keyword id="KW-0520">NAD</keyword>
<keyword id="KW-0560">Oxidoreductase</keyword>
<keyword id="KW-1185">Reference proteome</keyword>
<keyword id="KW-0816">Tricarboxylic acid cycle</keyword>
<evidence type="ECO:0000255" key="1">
    <source>
        <dbReference type="HAMAP-Rule" id="MF_01516"/>
    </source>
</evidence>
<comment type="function">
    <text evidence="1">Catalyzes the reversible oxidation of malate to oxaloacetate.</text>
</comment>
<comment type="catalytic activity">
    <reaction evidence="1">
        <text>(S)-malate + NAD(+) = oxaloacetate + NADH + H(+)</text>
        <dbReference type="Rhea" id="RHEA:21432"/>
        <dbReference type="ChEBI" id="CHEBI:15378"/>
        <dbReference type="ChEBI" id="CHEBI:15589"/>
        <dbReference type="ChEBI" id="CHEBI:16452"/>
        <dbReference type="ChEBI" id="CHEBI:57540"/>
        <dbReference type="ChEBI" id="CHEBI:57945"/>
        <dbReference type="EC" id="1.1.1.37"/>
    </reaction>
</comment>
<comment type="subunit">
    <text evidence="1">Homodimer.</text>
</comment>
<comment type="similarity">
    <text evidence="1">Belongs to the LDH/MDH superfamily. MDH type 1 family.</text>
</comment>
<gene>
    <name evidence="1" type="primary">mdh</name>
    <name type="ordered locus">EC55989_3649</name>
</gene>
<accession>B7LHU4</accession>
<protein>
    <recommendedName>
        <fullName evidence="1">Malate dehydrogenase</fullName>
        <ecNumber evidence="1">1.1.1.37</ecNumber>
    </recommendedName>
</protein>